<organism>
    <name type="scientific">Candida glabrata (strain ATCC 2001 / BCRC 20586 / JCM 3761 / NBRC 0622 / NRRL Y-65 / CBS 138)</name>
    <name type="common">Yeast</name>
    <name type="synonym">Nakaseomyces glabratus</name>
    <dbReference type="NCBI Taxonomy" id="284593"/>
    <lineage>
        <taxon>Eukaryota</taxon>
        <taxon>Fungi</taxon>
        <taxon>Dikarya</taxon>
        <taxon>Ascomycota</taxon>
        <taxon>Saccharomycotina</taxon>
        <taxon>Saccharomycetes</taxon>
        <taxon>Saccharomycetales</taxon>
        <taxon>Saccharomycetaceae</taxon>
        <taxon>Nakaseomyces</taxon>
    </lineage>
</organism>
<feature type="initiator methionine" description="Removed" evidence="1">
    <location>
        <position position="1"/>
    </location>
</feature>
<feature type="chain" id="PRO_0000158292" description="Histone H4">
    <location>
        <begin position="2"/>
        <end position="103"/>
    </location>
</feature>
<feature type="DNA-binding region">
    <location>
        <begin position="17"/>
        <end position="21"/>
    </location>
</feature>
<feature type="region of interest" description="Disordered" evidence="4">
    <location>
        <begin position="1"/>
        <end position="20"/>
    </location>
</feature>
<feature type="compositionally biased region" description="Gly residues" evidence="4">
    <location>
        <begin position="1"/>
        <end position="14"/>
    </location>
</feature>
<feature type="modified residue" description="N6-acetyl-N6-methyllysine; alternate" evidence="3">
    <location>
        <position position="6"/>
    </location>
</feature>
<feature type="modified residue" description="N6-methyllysine; alternate" evidence="2">
    <location>
        <position position="6"/>
    </location>
</feature>
<feature type="modified residue" description="N6-methyllysine; alternate" evidence="2">
    <location>
        <position position="9"/>
    </location>
</feature>
<feature type="modified residue" description="N6-acetyl-N6-methyllysine; alternate" evidence="3">
    <location>
        <position position="13"/>
    </location>
</feature>
<feature type="modified residue" description="N6-methyllysine; alternate" evidence="2">
    <location>
        <position position="13"/>
    </location>
</feature>
<feature type="modified residue" description="N6-glutaryllysine" evidence="2">
    <location>
        <position position="92"/>
    </location>
</feature>
<gene>
    <name type="primary">HHF1</name>
    <name type="ordered locus">CAGL0C04136g</name>
</gene>
<gene>
    <name type="primary">HHF2</name>
    <name type="ordered locus">CAGL0H09834g</name>
</gene>
<gene>
    <name type="primary">HHF3</name>
    <name type="ordered locus">CAGL0M06677g</name>
</gene>
<accession>Q8NIG3</accession>
<protein>
    <recommendedName>
        <fullName>Histone H4</fullName>
    </recommendedName>
</protein>
<sequence length="103" mass="11352">MSGRGKGGKGLGKGGAKRHRKILRDNIQGITKPAIRRLARRGGVKRISGLIYEEVRAVLKSFLESVIRDAVTYTEHAKRKTVTSLDVVYALKRQGRTLYGFGG</sequence>
<name>H4_CANGA</name>
<dbReference type="EMBL" id="AF520060">
    <property type="protein sequence ID" value="AAM74210.1"/>
    <property type="molecule type" value="Genomic_DNA"/>
</dbReference>
<dbReference type="EMBL" id="AF520061">
    <property type="protein sequence ID" value="AAM74216.1"/>
    <property type="molecule type" value="Genomic_DNA"/>
</dbReference>
<dbReference type="EMBL" id="CR380949">
    <property type="protein sequence ID" value="CAG58261.1"/>
    <property type="molecule type" value="Genomic_DNA"/>
</dbReference>
<dbReference type="EMBL" id="CR380954">
    <property type="protein sequence ID" value="CAG60158.1"/>
    <property type="molecule type" value="Genomic_DNA"/>
</dbReference>
<dbReference type="EMBL" id="CR380959">
    <property type="protein sequence ID" value="CAG62614.1"/>
    <property type="molecule type" value="Genomic_DNA"/>
</dbReference>
<dbReference type="RefSeq" id="XP_445355.1">
    <property type="nucleotide sequence ID" value="XM_445355.1"/>
</dbReference>
<dbReference type="RefSeq" id="XP_447225.1">
    <property type="nucleotide sequence ID" value="XM_447225.1"/>
</dbReference>
<dbReference type="RefSeq" id="XP_449638.1">
    <property type="nucleotide sequence ID" value="XM_449638.1"/>
</dbReference>
<dbReference type="SMR" id="Q8NIG3"/>
<dbReference type="FunCoup" id="Q8NIG3">
    <property type="interactions" value="1570"/>
</dbReference>
<dbReference type="STRING" id="284593.Q8NIG3"/>
<dbReference type="EnsemblFungi" id="CAGL0C04136g-T">
    <property type="protein sequence ID" value="CAGL0C04136g-T-p1"/>
    <property type="gene ID" value="CAGL0C04136g"/>
</dbReference>
<dbReference type="EnsemblFungi" id="CAGL0H09834g-T">
    <property type="protein sequence ID" value="CAGL0H09834g-T-p1"/>
    <property type="gene ID" value="CAGL0H09834g"/>
</dbReference>
<dbReference type="EnsemblFungi" id="CAGL0M06677g-T">
    <property type="protein sequence ID" value="CAGL0M06677g-T-p1"/>
    <property type="gene ID" value="CAGL0M06677g"/>
</dbReference>
<dbReference type="KEGG" id="cgr:2886845"/>
<dbReference type="KEGG" id="cgr:2888694"/>
<dbReference type="KEGG" id="cgr:2891686"/>
<dbReference type="CGD" id="CAL0127348">
    <property type="gene designation" value="HHF1"/>
</dbReference>
<dbReference type="CGD" id="CAL0136709">
    <property type="gene designation" value="HHF2"/>
</dbReference>
<dbReference type="CGD" id="CAL0131500">
    <property type="gene designation" value="HHF3"/>
</dbReference>
<dbReference type="VEuPathDB" id="FungiDB:B1J91_C04136g"/>
<dbReference type="VEuPathDB" id="FungiDB:B1J91_H09834g"/>
<dbReference type="VEuPathDB" id="FungiDB:B1J91_M06677g"/>
<dbReference type="VEuPathDB" id="FungiDB:CAGL0C04136g"/>
<dbReference type="VEuPathDB" id="FungiDB:CAGL0H09834g"/>
<dbReference type="VEuPathDB" id="FungiDB:CAGL0M06677g"/>
<dbReference type="eggNOG" id="KOG3467">
    <property type="taxonomic scope" value="Eukaryota"/>
</dbReference>
<dbReference type="HOGENOM" id="CLU_109117_2_3_1"/>
<dbReference type="InParanoid" id="Q8NIG3"/>
<dbReference type="OMA" id="QKEHING"/>
<dbReference type="Proteomes" id="UP000002428">
    <property type="component" value="Chromosome C"/>
</dbReference>
<dbReference type="Proteomes" id="UP000002428">
    <property type="component" value="Chromosome H"/>
</dbReference>
<dbReference type="Proteomes" id="UP000002428">
    <property type="component" value="Chromosome M"/>
</dbReference>
<dbReference type="GO" id="GO:0062040">
    <property type="term" value="C:fungal biofilm matrix"/>
    <property type="evidence" value="ECO:0000314"/>
    <property type="project" value="CGD"/>
</dbReference>
<dbReference type="GO" id="GO:0000786">
    <property type="term" value="C:nucleosome"/>
    <property type="evidence" value="ECO:0007669"/>
    <property type="project" value="UniProtKB-KW"/>
</dbReference>
<dbReference type="GO" id="GO:0005634">
    <property type="term" value="C:nucleus"/>
    <property type="evidence" value="ECO:0007669"/>
    <property type="project" value="UniProtKB-SubCell"/>
</dbReference>
<dbReference type="GO" id="GO:0003677">
    <property type="term" value="F:DNA binding"/>
    <property type="evidence" value="ECO:0007669"/>
    <property type="project" value="UniProtKB-KW"/>
</dbReference>
<dbReference type="GO" id="GO:0046982">
    <property type="term" value="F:protein heterodimerization activity"/>
    <property type="evidence" value="ECO:0007669"/>
    <property type="project" value="InterPro"/>
</dbReference>
<dbReference type="GO" id="GO:0030527">
    <property type="term" value="F:structural constituent of chromatin"/>
    <property type="evidence" value="ECO:0007669"/>
    <property type="project" value="InterPro"/>
</dbReference>
<dbReference type="CDD" id="cd22912">
    <property type="entry name" value="HFD_H4"/>
    <property type="match status" value="1"/>
</dbReference>
<dbReference type="FunFam" id="1.10.20.10:FF:000007">
    <property type="entry name" value="Histone H4"/>
    <property type="match status" value="1"/>
</dbReference>
<dbReference type="Gene3D" id="1.10.20.10">
    <property type="entry name" value="Histone, subunit A"/>
    <property type="match status" value="1"/>
</dbReference>
<dbReference type="InterPro" id="IPR035425">
    <property type="entry name" value="CENP-T/H4_C"/>
</dbReference>
<dbReference type="InterPro" id="IPR009072">
    <property type="entry name" value="Histone-fold"/>
</dbReference>
<dbReference type="InterPro" id="IPR001951">
    <property type="entry name" value="Histone_H4"/>
</dbReference>
<dbReference type="InterPro" id="IPR019809">
    <property type="entry name" value="Histone_H4_CS"/>
</dbReference>
<dbReference type="PANTHER" id="PTHR10484">
    <property type="entry name" value="HISTONE H4"/>
    <property type="match status" value="1"/>
</dbReference>
<dbReference type="Pfam" id="PF15511">
    <property type="entry name" value="CENP-T_C"/>
    <property type="match status" value="1"/>
</dbReference>
<dbReference type="PRINTS" id="PR00623">
    <property type="entry name" value="HISTONEH4"/>
</dbReference>
<dbReference type="SMART" id="SM00417">
    <property type="entry name" value="H4"/>
    <property type="match status" value="1"/>
</dbReference>
<dbReference type="SUPFAM" id="SSF47113">
    <property type="entry name" value="Histone-fold"/>
    <property type="match status" value="1"/>
</dbReference>
<dbReference type="PROSITE" id="PS00047">
    <property type="entry name" value="HISTONE_H4"/>
    <property type="match status" value="1"/>
</dbReference>
<comment type="function">
    <text evidence="1">Core component of nucleosome. Nucleosomes wrap and compact DNA into chromatin, limiting DNA accessibility to the cellular machineries which require DNA as a template. Histones thereby play a central role in transcription regulation, DNA repair, DNA replication and chromosomal stability. DNA accessibility is regulated via a complex set of post-translational modifications of histones, also called histone code, and nucleosome remodeling (By similarity).</text>
</comment>
<comment type="subunit">
    <text evidence="1">The nucleosome is a histone octamer containing two molecules each of H2A, H2B, H3 and H4 assembled in one H3-H4 heterotetramer and two H2A-H2B heterodimers. The octamer wraps approximately 147 bp of DNA (By similarity).</text>
</comment>
<comment type="subcellular location">
    <subcellularLocation>
        <location evidence="1">Nucleus</location>
    </subcellularLocation>
    <subcellularLocation>
        <location evidence="1">Chromosome</location>
    </subcellularLocation>
</comment>
<comment type="PTM">
    <text evidence="2">Glutarylation at Lys-92 (H4K91glu) destabilizes nucleosomes by promoting dissociation of the H2A-H2B dimers from nucleosomes.</text>
</comment>
<comment type="similarity">
    <text evidence="5">Belongs to the histone H4 family.</text>
</comment>
<reference key="1">
    <citation type="journal article" date="2002" name="Proc. Natl. Acad. Sci. U.S.A.">
        <title>Gene order evolution and paleopolyploidy in hemiascomycete yeasts.</title>
        <authorList>
            <person name="Wong S."/>
            <person name="Butler G."/>
            <person name="Wolfe K.H."/>
        </authorList>
    </citation>
    <scope>NUCLEOTIDE SEQUENCE [GENOMIC DNA]</scope>
    <source>
        <strain>ATCC 2001 / BCRC 20586 / JCM 3761 / NBRC 0622 / NRRL Y-65 / CBS 138</strain>
    </source>
</reference>
<reference key="2">
    <citation type="journal article" date="2004" name="Nature">
        <title>Genome evolution in yeasts.</title>
        <authorList>
            <person name="Dujon B."/>
            <person name="Sherman D."/>
            <person name="Fischer G."/>
            <person name="Durrens P."/>
            <person name="Casaregola S."/>
            <person name="Lafontaine I."/>
            <person name="de Montigny J."/>
            <person name="Marck C."/>
            <person name="Neuveglise C."/>
            <person name="Talla E."/>
            <person name="Goffard N."/>
            <person name="Frangeul L."/>
            <person name="Aigle M."/>
            <person name="Anthouard V."/>
            <person name="Babour A."/>
            <person name="Barbe V."/>
            <person name="Barnay S."/>
            <person name="Blanchin S."/>
            <person name="Beckerich J.-M."/>
            <person name="Beyne E."/>
            <person name="Bleykasten C."/>
            <person name="Boisrame A."/>
            <person name="Boyer J."/>
            <person name="Cattolico L."/>
            <person name="Confanioleri F."/>
            <person name="de Daruvar A."/>
            <person name="Despons L."/>
            <person name="Fabre E."/>
            <person name="Fairhead C."/>
            <person name="Ferry-Dumazet H."/>
            <person name="Groppi A."/>
            <person name="Hantraye F."/>
            <person name="Hennequin C."/>
            <person name="Jauniaux N."/>
            <person name="Joyet P."/>
            <person name="Kachouri R."/>
            <person name="Kerrest A."/>
            <person name="Koszul R."/>
            <person name="Lemaire M."/>
            <person name="Lesur I."/>
            <person name="Ma L."/>
            <person name="Muller H."/>
            <person name="Nicaud J.-M."/>
            <person name="Nikolski M."/>
            <person name="Oztas S."/>
            <person name="Ozier-Kalogeropoulos O."/>
            <person name="Pellenz S."/>
            <person name="Potier S."/>
            <person name="Richard G.-F."/>
            <person name="Straub M.-L."/>
            <person name="Suleau A."/>
            <person name="Swennen D."/>
            <person name="Tekaia F."/>
            <person name="Wesolowski-Louvel M."/>
            <person name="Westhof E."/>
            <person name="Wirth B."/>
            <person name="Zeniou-Meyer M."/>
            <person name="Zivanovic Y."/>
            <person name="Bolotin-Fukuhara M."/>
            <person name="Thierry A."/>
            <person name="Bouchier C."/>
            <person name="Caudron B."/>
            <person name="Scarpelli C."/>
            <person name="Gaillardin C."/>
            <person name="Weissenbach J."/>
            <person name="Wincker P."/>
            <person name="Souciet J.-L."/>
        </authorList>
    </citation>
    <scope>NUCLEOTIDE SEQUENCE [LARGE SCALE GENOMIC DNA]</scope>
    <source>
        <strain>ATCC 2001 / BCRC 20586 / JCM 3761 / NBRC 0622 / NRRL Y-65 / CBS 138</strain>
    </source>
</reference>
<keyword id="KW-0007">Acetylation</keyword>
<keyword id="KW-0158">Chromosome</keyword>
<keyword id="KW-0238">DNA-binding</keyword>
<keyword id="KW-0488">Methylation</keyword>
<keyword id="KW-0544">Nucleosome core</keyword>
<keyword id="KW-0539">Nucleus</keyword>
<keyword id="KW-1185">Reference proteome</keyword>
<proteinExistence type="inferred from homology"/>
<evidence type="ECO:0000250" key="1"/>
<evidence type="ECO:0000250" key="2">
    <source>
        <dbReference type="UniProtKB" id="P02309"/>
    </source>
</evidence>
<evidence type="ECO:0000250" key="3">
    <source>
        <dbReference type="UniProtKB" id="P62805"/>
    </source>
</evidence>
<evidence type="ECO:0000256" key="4">
    <source>
        <dbReference type="SAM" id="MobiDB-lite"/>
    </source>
</evidence>
<evidence type="ECO:0000305" key="5"/>